<reference key="1">
    <citation type="submission" date="2008-05" db="EMBL/GenBank/DDBJ databases">
        <title>Genome sequence of Helicobacter pylori from the remote Amazon: traces of Asian ancestry of the first Americans.</title>
        <authorList>
            <person name="Kersulyte D."/>
            <person name="Kalia A."/>
            <person name="Gilman R.H."/>
            <person name="Berg D.E."/>
        </authorList>
    </citation>
    <scope>NUCLEOTIDE SEQUENCE [LARGE SCALE GENOMIC DNA]</scope>
    <source>
        <strain>Shi470</strain>
    </source>
</reference>
<dbReference type="EC" id="2.5.1.-" evidence="1"/>
<dbReference type="EMBL" id="CP001072">
    <property type="protein sequence ID" value="ACD48475.1"/>
    <property type="molecule type" value="Genomic_DNA"/>
</dbReference>
<dbReference type="RefSeq" id="WP_000903923.1">
    <property type="nucleotide sequence ID" value="NC_010698.2"/>
</dbReference>
<dbReference type="SMR" id="B2UUE3"/>
<dbReference type="KEGG" id="hps:HPSH_05315"/>
<dbReference type="HOGENOM" id="CLU_052665_1_0_7"/>
<dbReference type="GO" id="GO:0016765">
    <property type="term" value="F:transferase activity, transferring alkyl or aryl (other than methyl) groups"/>
    <property type="evidence" value="ECO:0007669"/>
    <property type="project" value="InterPro"/>
</dbReference>
<dbReference type="GO" id="GO:0002098">
    <property type="term" value="P:tRNA wobble uridine modification"/>
    <property type="evidence" value="ECO:0007669"/>
    <property type="project" value="InterPro"/>
</dbReference>
<dbReference type="CDD" id="cd02440">
    <property type="entry name" value="AdoMet_MTases"/>
    <property type="match status" value="1"/>
</dbReference>
<dbReference type="Gene3D" id="3.40.50.150">
    <property type="entry name" value="Vaccinia Virus protein VP39"/>
    <property type="match status" value="1"/>
</dbReference>
<dbReference type="HAMAP" id="MF_01590">
    <property type="entry name" value="tRNA_carboxymethyltr_CmoB"/>
    <property type="match status" value="1"/>
</dbReference>
<dbReference type="InterPro" id="IPR010017">
    <property type="entry name" value="CmoB"/>
</dbReference>
<dbReference type="InterPro" id="IPR027555">
    <property type="entry name" value="Mo5U34_MeTrfas-like"/>
</dbReference>
<dbReference type="InterPro" id="IPR029063">
    <property type="entry name" value="SAM-dependent_MTases_sf"/>
</dbReference>
<dbReference type="NCBIfam" id="NF011650">
    <property type="entry name" value="PRK15068.1"/>
    <property type="match status" value="1"/>
</dbReference>
<dbReference type="NCBIfam" id="TIGR00452">
    <property type="entry name" value="tRNA 5-methoxyuridine(34)/uridine 5-oxyacetic acid(34) synthase CmoB"/>
    <property type="match status" value="1"/>
</dbReference>
<dbReference type="Pfam" id="PF08003">
    <property type="entry name" value="Methyltransf_9"/>
    <property type="match status" value="1"/>
</dbReference>
<dbReference type="SUPFAM" id="SSF53335">
    <property type="entry name" value="S-adenosyl-L-methionine-dependent methyltransferases"/>
    <property type="match status" value="1"/>
</dbReference>
<sequence>MLICNDKSNPKTLLEEIMALRPWRKGPFEISQIKIDSEWDSSIKWDLVKNATPLKDKVVADVGCNNGYYLFKMLEHGPKSLVGFDPGVLVKKQFEFLAPFFDKEKKIIYESLGVEDLHEKYPNAFDVIFCLGVLYHRKSPLEALKALYHALKMSGELVLDTLIIDSPLDIALCPKKTYAKMKNVYFIPSVSALKGWCERVGFENFEILSVLKTTPKEQRKTDFILGQSLEDFLDKTDPSKTLEGYDAPLRGYFKMLKPSKL</sequence>
<organism>
    <name type="scientific">Helicobacter pylori (strain Shi470)</name>
    <dbReference type="NCBI Taxonomy" id="512562"/>
    <lineage>
        <taxon>Bacteria</taxon>
        <taxon>Pseudomonadati</taxon>
        <taxon>Campylobacterota</taxon>
        <taxon>Epsilonproteobacteria</taxon>
        <taxon>Campylobacterales</taxon>
        <taxon>Helicobacteraceae</taxon>
        <taxon>Helicobacter</taxon>
    </lineage>
</organism>
<name>CMOB_HELPS</name>
<proteinExistence type="inferred from homology"/>
<feature type="chain" id="PRO_0000381860" description="tRNA U34 carboxymethyltransferase">
    <location>
        <begin position="1"/>
        <end position="261"/>
    </location>
</feature>
<feature type="binding site" evidence="1">
    <location>
        <position position="25"/>
    </location>
    <ligand>
        <name>carboxy-S-adenosyl-L-methionine</name>
        <dbReference type="ChEBI" id="CHEBI:134278"/>
    </ligand>
</feature>
<feature type="binding site" evidence="1">
    <location>
        <position position="39"/>
    </location>
    <ligand>
        <name>carboxy-S-adenosyl-L-methionine</name>
        <dbReference type="ChEBI" id="CHEBI:134278"/>
    </ligand>
</feature>
<feature type="binding site" evidence="1">
    <location>
        <position position="44"/>
    </location>
    <ligand>
        <name>carboxy-S-adenosyl-L-methionine</name>
        <dbReference type="ChEBI" id="CHEBI:134278"/>
    </ligand>
</feature>
<feature type="binding site" evidence="1">
    <location>
        <position position="63"/>
    </location>
    <ligand>
        <name>carboxy-S-adenosyl-L-methionine</name>
        <dbReference type="ChEBI" id="CHEBI:134278"/>
    </ligand>
</feature>
<feature type="binding site" evidence="1">
    <location>
        <begin position="114"/>
        <end position="115"/>
    </location>
    <ligand>
        <name>carboxy-S-adenosyl-L-methionine</name>
        <dbReference type="ChEBI" id="CHEBI:134278"/>
    </ligand>
</feature>
<feature type="binding site" evidence="1">
    <location>
        <position position="135"/>
    </location>
    <ligand>
        <name>carboxy-S-adenosyl-L-methionine</name>
        <dbReference type="ChEBI" id="CHEBI:134278"/>
    </ligand>
</feature>
<feature type="binding site" evidence="1">
    <location>
        <position position="250"/>
    </location>
    <ligand>
        <name>carboxy-S-adenosyl-L-methionine</name>
        <dbReference type="ChEBI" id="CHEBI:134278"/>
    </ligand>
</feature>
<keyword id="KW-0808">Transferase</keyword>
<keyword id="KW-0819">tRNA processing</keyword>
<evidence type="ECO:0000255" key="1">
    <source>
        <dbReference type="HAMAP-Rule" id="MF_01590"/>
    </source>
</evidence>
<comment type="function">
    <text evidence="1">Catalyzes carboxymethyl transfer from carboxy-S-adenosyl-L-methionine (Cx-SAM) to 5-hydroxyuridine (ho5U) to form 5-carboxymethoxyuridine (cmo5U) at position 34 in tRNAs.</text>
</comment>
<comment type="catalytic activity">
    <reaction evidence="1">
        <text>carboxy-S-adenosyl-L-methionine + 5-hydroxyuridine(34) in tRNA = 5-carboxymethoxyuridine(34) in tRNA + S-adenosyl-L-homocysteine + H(+)</text>
        <dbReference type="Rhea" id="RHEA:52848"/>
        <dbReference type="Rhea" id="RHEA-COMP:13381"/>
        <dbReference type="Rhea" id="RHEA-COMP:13383"/>
        <dbReference type="ChEBI" id="CHEBI:15378"/>
        <dbReference type="ChEBI" id="CHEBI:57856"/>
        <dbReference type="ChEBI" id="CHEBI:134278"/>
        <dbReference type="ChEBI" id="CHEBI:136877"/>
        <dbReference type="ChEBI" id="CHEBI:136879"/>
    </reaction>
</comment>
<comment type="subunit">
    <text evidence="1">Homotetramer.</text>
</comment>
<comment type="similarity">
    <text evidence="1">Belongs to the class I-like SAM-binding methyltransferase superfamily. CmoB family.</text>
</comment>
<protein>
    <recommendedName>
        <fullName evidence="1">tRNA U34 carboxymethyltransferase</fullName>
        <ecNumber evidence="1">2.5.1.-</ecNumber>
    </recommendedName>
</protein>
<gene>
    <name evidence="1" type="primary">cmoB</name>
    <name type="ordered locus">HPSH_05315</name>
</gene>
<accession>B2UUE3</accession>